<proteinExistence type="evidence at protein level"/>
<sequence>MNESERKIVEEFQKETGINFKNEELLFRALCHSSYANEQNQAGRKDVESNEKLEFLGDAVLELFVCEILYKKYPEAEVGDLARVKSAAASEEVLAMVSRKMNLGKFLFLGKGEEKTGGRDRDSILADAFEALLAAIYLDQGYEKIKELFEQEFEFYIEKIMKGEMLFDYKTALQEIVQSEHKVPPEYILVRTEKNDGDRIFVVEVRVNGKTIATGKGRTKKEAEKEAARIAYEKLLKERS</sequence>
<protein>
    <recommendedName>
        <fullName>Ribonuclease 3</fullName>
        <ecNumber>3.1.26.3</ecNumber>
    </recommendedName>
    <alternativeName>
        <fullName>Ribonuclease III</fullName>
        <shortName>RNase III</shortName>
    </alternativeName>
</protein>
<keyword id="KW-0002">3D-structure</keyword>
<keyword id="KW-0963">Cytoplasm</keyword>
<keyword id="KW-0255">Endonuclease</keyword>
<keyword id="KW-0378">Hydrolase</keyword>
<keyword id="KW-0460">Magnesium</keyword>
<keyword id="KW-0479">Metal-binding</keyword>
<keyword id="KW-0507">mRNA processing</keyword>
<keyword id="KW-0540">Nuclease</keyword>
<keyword id="KW-1185">Reference proteome</keyword>
<keyword id="KW-0694">RNA-binding</keyword>
<keyword id="KW-0698">rRNA processing</keyword>
<keyword id="KW-0699">rRNA-binding</keyword>
<keyword id="KW-0819">tRNA processing</keyword>
<gene>
    <name type="primary">rnc</name>
    <name type="ordered locus">TM_1102</name>
</gene>
<reference key="1">
    <citation type="journal article" date="1999" name="Nature">
        <title>Evidence for lateral gene transfer between Archaea and Bacteria from genome sequence of Thermotoga maritima.</title>
        <authorList>
            <person name="Nelson K.E."/>
            <person name="Clayton R.A."/>
            <person name="Gill S.R."/>
            <person name="Gwinn M.L."/>
            <person name="Dodson R.J."/>
            <person name="Haft D.H."/>
            <person name="Hickey E.K."/>
            <person name="Peterson J.D."/>
            <person name="Nelson W.C."/>
            <person name="Ketchum K.A."/>
            <person name="McDonald L.A."/>
            <person name="Utterback T.R."/>
            <person name="Malek J.A."/>
            <person name="Linher K.D."/>
            <person name="Garrett M.M."/>
            <person name="Stewart A.M."/>
            <person name="Cotton M.D."/>
            <person name="Pratt M.S."/>
            <person name="Phillips C.A."/>
            <person name="Richardson D.L."/>
            <person name="Heidelberg J.F."/>
            <person name="Sutton G.G."/>
            <person name="Fleischmann R.D."/>
            <person name="Eisen J.A."/>
            <person name="White O."/>
            <person name="Salzberg S.L."/>
            <person name="Smith H.O."/>
            <person name="Venter J.C."/>
            <person name="Fraser C.M."/>
        </authorList>
    </citation>
    <scope>NUCLEOTIDE SEQUENCE [LARGE SCALE GENOMIC DNA]</scope>
    <source>
        <strain>ATCC 43589 / DSM 3109 / JCM 10099 / NBRC 100826 / MSB8</strain>
    </source>
</reference>
<reference key="2">
    <citation type="journal article" date="2010" name="Biochemistry">
        <title>Thermotoga maritima ribonuclease III. Characterization of thermostable biochemical behavior and analysis of conserved base pairs that function as reactivity epitopes for the Thermotoga 23S rRNA precursor.</title>
        <authorList>
            <person name="Nathania L."/>
            <person name="Nicholson A.W."/>
        </authorList>
    </citation>
    <scope>FUNCTION AS AN RNASE</scope>
    <scope>FUNCTION AS AN ENDONUCLEASE</scope>
    <scope>BIOPHYSICOCHEMICAL PROPERTIES</scope>
    <scope>COFACTOR</scope>
    <scope>RRNA-BINDING</scope>
</reference>
<reference key="3">
    <citation type="submission" date="2009-02" db="PDB data bank">
        <title>Crystal structure of ribonuclease III (TM1102) from Thermotoga maritima at 2.0 A resolution.</title>
        <authorList>
            <consortium name="Joint center for structural genomics (JCSG)"/>
        </authorList>
    </citation>
    <scope>X-RAY CRYSTALLOGRAPHY (2.0 ANGSTROMS)</scope>
    <scope>SUBUNIT</scope>
</reference>
<accession>Q9X0I6</accession>
<dbReference type="EC" id="3.1.26.3"/>
<dbReference type="EMBL" id="AE000512">
    <property type="protein sequence ID" value="AAD36178.1"/>
    <property type="molecule type" value="Genomic_DNA"/>
</dbReference>
<dbReference type="PIR" id="H72294">
    <property type="entry name" value="H72294"/>
</dbReference>
<dbReference type="RefSeq" id="NP_228908.1">
    <property type="nucleotide sequence ID" value="NC_000853.1"/>
</dbReference>
<dbReference type="RefSeq" id="WP_004080335.1">
    <property type="nucleotide sequence ID" value="NC_000853.1"/>
</dbReference>
<dbReference type="PDB" id="1O0W">
    <property type="method" value="X-ray"/>
    <property type="resolution" value="2.00 A"/>
    <property type="chains" value="A/B=1-240"/>
</dbReference>
<dbReference type="PDBsum" id="1O0W"/>
<dbReference type="SMR" id="Q9X0I6"/>
<dbReference type="FunCoup" id="Q9X0I6">
    <property type="interactions" value="306"/>
</dbReference>
<dbReference type="STRING" id="243274.TM_1102"/>
<dbReference type="PaxDb" id="243274-THEMA_08835"/>
<dbReference type="EnsemblBacteria" id="AAD36178">
    <property type="protein sequence ID" value="AAD36178"/>
    <property type="gene ID" value="TM_1102"/>
</dbReference>
<dbReference type="KEGG" id="tma:TM1102"/>
<dbReference type="KEGG" id="tmi:THEMA_08835"/>
<dbReference type="KEGG" id="tmm:Tmari_1108"/>
<dbReference type="KEGG" id="tmw:THMA_1125"/>
<dbReference type="eggNOG" id="COG0571">
    <property type="taxonomic scope" value="Bacteria"/>
</dbReference>
<dbReference type="InParanoid" id="Q9X0I6"/>
<dbReference type="OrthoDB" id="9805026at2"/>
<dbReference type="BRENDA" id="3.1.26.3">
    <property type="organism ID" value="6331"/>
</dbReference>
<dbReference type="EvolutionaryTrace" id="Q9X0I6"/>
<dbReference type="Proteomes" id="UP000008183">
    <property type="component" value="Chromosome"/>
</dbReference>
<dbReference type="GO" id="GO:0005829">
    <property type="term" value="C:cytosol"/>
    <property type="evidence" value="ECO:0000318"/>
    <property type="project" value="GO_Central"/>
</dbReference>
<dbReference type="GO" id="GO:0003725">
    <property type="term" value="F:double-stranded RNA binding"/>
    <property type="evidence" value="ECO:0000318"/>
    <property type="project" value="GO_Central"/>
</dbReference>
<dbReference type="GO" id="GO:0046872">
    <property type="term" value="F:metal ion binding"/>
    <property type="evidence" value="ECO:0007669"/>
    <property type="project" value="UniProtKB-KW"/>
</dbReference>
<dbReference type="GO" id="GO:0004525">
    <property type="term" value="F:ribonuclease III activity"/>
    <property type="evidence" value="ECO:0000318"/>
    <property type="project" value="GO_Central"/>
</dbReference>
<dbReference type="GO" id="GO:0019843">
    <property type="term" value="F:rRNA binding"/>
    <property type="evidence" value="ECO:0007669"/>
    <property type="project" value="UniProtKB-KW"/>
</dbReference>
<dbReference type="GO" id="GO:0006397">
    <property type="term" value="P:mRNA processing"/>
    <property type="evidence" value="ECO:0007669"/>
    <property type="project" value="UniProtKB-UniRule"/>
</dbReference>
<dbReference type="GO" id="GO:0010468">
    <property type="term" value="P:regulation of gene expression"/>
    <property type="evidence" value="ECO:0000318"/>
    <property type="project" value="GO_Central"/>
</dbReference>
<dbReference type="GO" id="GO:0006396">
    <property type="term" value="P:RNA processing"/>
    <property type="evidence" value="ECO:0000318"/>
    <property type="project" value="GO_Central"/>
</dbReference>
<dbReference type="GO" id="GO:0006364">
    <property type="term" value="P:rRNA processing"/>
    <property type="evidence" value="ECO:0007669"/>
    <property type="project" value="UniProtKB-UniRule"/>
</dbReference>
<dbReference type="GO" id="GO:0008033">
    <property type="term" value="P:tRNA processing"/>
    <property type="evidence" value="ECO:0007669"/>
    <property type="project" value="UniProtKB-KW"/>
</dbReference>
<dbReference type="CDD" id="cd10845">
    <property type="entry name" value="DSRM_RNAse_III_family"/>
    <property type="match status" value="1"/>
</dbReference>
<dbReference type="CDD" id="cd00593">
    <property type="entry name" value="RIBOc"/>
    <property type="match status" value="1"/>
</dbReference>
<dbReference type="FunFam" id="1.10.1520.10:FF:000001">
    <property type="entry name" value="Ribonuclease 3"/>
    <property type="match status" value="1"/>
</dbReference>
<dbReference type="FunFam" id="3.30.160.20:FF:000003">
    <property type="entry name" value="Ribonuclease 3"/>
    <property type="match status" value="1"/>
</dbReference>
<dbReference type="Gene3D" id="3.30.160.20">
    <property type="match status" value="1"/>
</dbReference>
<dbReference type="Gene3D" id="1.10.1520.10">
    <property type="entry name" value="Ribonuclease III domain"/>
    <property type="match status" value="1"/>
</dbReference>
<dbReference type="HAMAP" id="MF_00104">
    <property type="entry name" value="RNase_III"/>
    <property type="match status" value="1"/>
</dbReference>
<dbReference type="InterPro" id="IPR014720">
    <property type="entry name" value="dsRBD_dom"/>
</dbReference>
<dbReference type="InterPro" id="IPR011907">
    <property type="entry name" value="RNase_III"/>
</dbReference>
<dbReference type="InterPro" id="IPR000999">
    <property type="entry name" value="RNase_III_dom"/>
</dbReference>
<dbReference type="InterPro" id="IPR036389">
    <property type="entry name" value="RNase_III_sf"/>
</dbReference>
<dbReference type="NCBIfam" id="TIGR02191">
    <property type="entry name" value="RNaseIII"/>
    <property type="match status" value="1"/>
</dbReference>
<dbReference type="PANTHER" id="PTHR11207:SF0">
    <property type="entry name" value="RIBONUCLEASE 3"/>
    <property type="match status" value="1"/>
</dbReference>
<dbReference type="PANTHER" id="PTHR11207">
    <property type="entry name" value="RIBONUCLEASE III"/>
    <property type="match status" value="1"/>
</dbReference>
<dbReference type="Pfam" id="PF00035">
    <property type="entry name" value="dsrm"/>
    <property type="match status" value="1"/>
</dbReference>
<dbReference type="Pfam" id="PF14622">
    <property type="entry name" value="Ribonucleas_3_3"/>
    <property type="match status" value="1"/>
</dbReference>
<dbReference type="SMART" id="SM00358">
    <property type="entry name" value="DSRM"/>
    <property type="match status" value="1"/>
</dbReference>
<dbReference type="SMART" id="SM00535">
    <property type="entry name" value="RIBOc"/>
    <property type="match status" value="1"/>
</dbReference>
<dbReference type="SUPFAM" id="SSF54768">
    <property type="entry name" value="dsRNA-binding domain-like"/>
    <property type="match status" value="1"/>
</dbReference>
<dbReference type="SUPFAM" id="SSF69065">
    <property type="entry name" value="RNase III domain-like"/>
    <property type="match status" value="1"/>
</dbReference>
<dbReference type="PROSITE" id="PS50137">
    <property type="entry name" value="DS_RBD"/>
    <property type="match status" value="1"/>
</dbReference>
<dbReference type="PROSITE" id="PS00517">
    <property type="entry name" value="RNASE_3_1"/>
    <property type="match status" value="1"/>
</dbReference>
<dbReference type="PROSITE" id="PS50142">
    <property type="entry name" value="RNASE_3_2"/>
    <property type="match status" value="1"/>
</dbReference>
<organism>
    <name type="scientific">Thermotoga maritima (strain ATCC 43589 / DSM 3109 / JCM 10099 / NBRC 100826 / MSB8)</name>
    <dbReference type="NCBI Taxonomy" id="243274"/>
    <lineage>
        <taxon>Bacteria</taxon>
        <taxon>Thermotogati</taxon>
        <taxon>Thermotogota</taxon>
        <taxon>Thermotogae</taxon>
        <taxon>Thermotogales</taxon>
        <taxon>Thermotogaceae</taxon>
        <taxon>Thermotoga</taxon>
    </lineage>
</organism>
<name>RNC_THEMA</name>
<comment type="function">
    <text evidence="3">Digests double-stranded RNA. Involved in the processing of primary rRNA transcript to yield the immediate precursors to the large and small rRNAs (23S and 16S). Also processes some mRNAs, and tRNAs when they are encoded in the rRNA operon. Probably processes pre-crRNA and tracrRNA of type II CRISPR loci if present in the organism.</text>
</comment>
<comment type="catalytic activity">
    <reaction>
        <text>Endonucleolytic cleavage to 5'-phosphomonoester.</text>
        <dbReference type="EC" id="3.1.26.3"/>
    </reaction>
</comment>
<comment type="cofactor">
    <cofactor evidence="3">
        <name>Mg(2+)</name>
        <dbReference type="ChEBI" id="CHEBI:18420"/>
    </cofactor>
</comment>
<comment type="biophysicochemical properties">
    <phDependence>
        <text evidence="3">Optimum pH is 8.0.</text>
    </phDependence>
    <temperatureDependence>
        <text evidence="3">Optimum temperature is 40-70 degrees Celsius.</text>
    </temperatureDependence>
</comment>
<comment type="subunit">
    <text evidence="5">Homodimer.</text>
</comment>
<comment type="subcellular location">
    <subcellularLocation>
        <location evidence="1">Cytoplasm</location>
    </subcellularLocation>
</comment>
<comment type="similarity">
    <text evidence="4">Belongs to the ribonuclease III family.</text>
</comment>
<evidence type="ECO:0000250" key="1"/>
<evidence type="ECO:0000255" key="2"/>
<evidence type="ECO:0000269" key="3">
    <source>
    </source>
</evidence>
<evidence type="ECO:0000305" key="4"/>
<evidence type="ECO:0000305" key="5">
    <source ref="3"/>
</evidence>
<evidence type="ECO:0007829" key="6">
    <source>
        <dbReference type="PDB" id="1O0W"/>
    </source>
</evidence>
<feature type="chain" id="PRO_0000180448" description="Ribonuclease 3">
    <location>
        <begin position="1"/>
        <end position="240"/>
    </location>
</feature>
<feature type="domain" description="RNase III">
    <location>
        <begin position="9"/>
        <end position="141"/>
    </location>
</feature>
<feature type="domain" description="DRBM">
    <location>
        <begin position="168"/>
        <end position="237"/>
    </location>
</feature>
<feature type="active site" evidence="2">
    <location>
        <position position="58"/>
    </location>
</feature>
<feature type="active site" evidence="1">
    <location>
        <position position="130"/>
    </location>
</feature>
<feature type="binding site" evidence="1">
    <location>
        <position position="54"/>
    </location>
    <ligand>
        <name>Mg(2+)</name>
        <dbReference type="ChEBI" id="CHEBI:18420"/>
    </ligand>
</feature>
<feature type="binding site" evidence="1">
    <location>
        <position position="127"/>
    </location>
    <ligand>
        <name>Mg(2+)</name>
        <dbReference type="ChEBI" id="CHEBI:18420"/>
    </ligand>
</feature>
<feature type="binding site" evidence="1">
    <location>
        <position position="130"/>
    </location>
    <ligand>
        <name>Mg(2+)</name>
        <dbReference type="ChEBI" id="CHEBI:18420"/>
    </ligand>
</feature>
<feature type="helix" evidence="6">
    <location>
        <begin position="3"/>
        <end position="16"/>
    </location>
</feature>
<feature type="helix" evidence="6">
    <location>
        <begin position="23"/>
        <end position="30"/>
    </location>
</feature>
<feature type="helix" evidence="6">
    <location>
        <begin position="33"/>
        <end position="41"/>
    </location>
</feature>
<feature type="helix" evidence="6">
    <location>
        <begin position="51"/>
        <end position="72"/>
    </location>
</feature>
<feature type="helix" evidence="6">
    <location>
        <begin position="78"/>
        <end position="88"/>
    </location>
</feature>
<feature type="helix" evidence="6">
    <location>
        <begin position="91"/>
        <end position="100"/>
    </location>
</feature>
<feature type="helix" evidence="6">
    <location>
        <begin position="103"/>
        <end position="106"/>
    </location>
</feature>
<feature type="helix" evidence="6">
    <location>
        <begin position="111"/>
        <end position="115"/>
    </location>
</feature>
<feature type="helix" evidence="6">
    <location>
        <begin position="118"/>
        <end position="120"/>
    </location>
</feature>
<feature type="helix" evidence="6">
    <location>
        <begin position="122"/>
        <end position="140"/>
    </location>
</feature>
<feature type="helix" evidence="6">
    <location>
        <begin position="142"/>
        <end position="161"/>
    </location>
</feature>
<feature type="helix" evidence="6">
    <location>
        <begin position="169"/>
        <end position="181"/>
    </location>
</feature>
<feature type="strand" evidence="6">
    <location>
        <begin position="186"/>
        <end position="193"/>
    </location>
</feature>
<feature type="strand" evidence="6">
    <location>
        <begin position="200"/>
        <end position="207"/>
    </location>
</feature>
<feature type="strand" evidence="6">
    <location>
        <begin position="210"/>
        <end position="219"/>
    </location>
</feature>
<feature type="helix" evidence="6">
    <location>
        <begin position="220"/>
        <end position="235"/>
    </location>
</feature>